<organism>
    <name type="scientific">Acinetobacter baumannii (strain ATCC 17978 / DSM 105126 / CIP 53.77 / LMG 1025 / NCDC KC755 / 5377)</name>
    <dbReference type="NCBI Taxonomy" id="400667"/>
    <lineage>
        <taxon>Bacteria</taxon>
        <taxon>Pseudomonadati</taxon>
        <taxon>Pseudomonadota</taxon>
        <taxon>Gammaproteobacteria</taxon>
        <taxon>Moraxellales</taxon>
        <taxon>Moraxellaceae</taxon>
        <taxon>Acinetobacter</taxon>
        <taxon>Acinetobacter calcoaceticus/baumannii complex</taxon>
    </lineage>
</organism>
<sequence>MKTPKVGFVSLGCPKALVDSERILTQLKTEGYQVASDYDGADLVVVNTCGFIESAVQESLDAIGEAMSENGRVIVTGCLGKDEDKIRQMHPNVLKVTGAAAYQDVMEAVHEYVPAPPKHNPFIDLVPEQGIRLTPKHYAYLKISEGCNHRCTFCIIPSMRGDLVSRPVGSVLEEAAALKRAGVKEILVISQDTSAYGVDTKYKLDFWNGQPVKTKFFDMCEALGQLGIWVRLHYVYPYPHVDAVIDLMAQGKILPYLDIPFQHASPRVLKLMKRPAHSENTLEKIKLWREKCPDLVIRSTFVVGFPGETEEDFQILLDWLVEAQLDRVGCFTYSPVEGATANDLPDHVPEEIKQERYERFMQVQQQISAAKLQKRIGQTMTVLVDSLEDEYPVAVARSYADAPEIDGNVFVEDIDKSTIQPGDMLEVEITDADEYDLFAKLIKIKSV</sequence>
<comment type="function">
    <text evidence="1">Catalyzes the methylthiolation of an aspartic acid residue of ribosomal protein uS12.</text>
</comment>
<comment type="catalytic activity">
    <reaction evidence="1">
        <text>L-aspartate(89)-[ribosomal protein uS12]-hydrogen + (sulfur carrier)-SH + AH2 + 2 S-adenosyl-L-methionine = 3-methylsulfanyl-L-aspartate(89)-[ribosomal protein uS12]-hydrogen + (sulfur carrier)-H + 5'-deoxyadenosine + L-methionine + A + S-adenosyl-L-homocysteine + 2 H(+)</text>
        <dbReference type="Rhea" id="RHEA:37087"/>
        <dbReference type="Rhea" id="RHEA-COMP:10460"/>
        <dbReference type="Rhea" id="RHEA-COMP:10461"/>
        <dbReference type="Rhea" id="RHEA-COMP:14737"/>
        <dbReference type="Rhea" id="RHEA-COMP:14739"/>
        <dbReference type="ChEBI" id="CHEBI:13193"/>
        <dbReference type="ChEBI" id="CHEBI:15378"/>
        <dbReference type="ChEBI" id="CHEBI:17319"/>
        <dbReference type="ChEBI" id="CHEBI:17499"/>
        <dbReference type="ChEBI" id="CHEBI:29917"/>
        <dbReference type="ChEBI" id="CHEBI:29961"/>
        <dbReference type="ChEBI" id="CHEBI:57844"/>
        <dbReference type="ChEBI" id="CHEBI:57856"/>
        <dbReference type="ChEBI" id="CHEBI:59789"/>
        <dbReference type="ChEBI" id="CHEBI:64428"/>
        <dbReference type="ChEBI" id="CHEBI:73599"/>
        <dbReference type="EC" id="2.8.4.4"/>
    </reaction>
</comment>
<comment type="cofactor">
    <cofactor evidence="1">
        <name>[4Fe-4S] cluster</name>
        <dbReference type="ChEBI" id="CHEBI:49883"/>
    </cofactor>
    <text evidence="1">Binds 2 [4Fe-4S] clusters. One cluster is coordinated with 3 cysteines and an exchangeable S-adenosyl-L-methionine.</text>
</comment>
<comment type="subcellular location">
    <subcellularLocation>
        <location evidence="1">Cytoplasm</location>
    </subcellularLocation>
</comment>
<comment type="similarity">
    <text evidence="1">Belongs to the methylthiotransferase family. RimO subfamily.</text>
</comment>
<proteinExistence type="inferred from homology"/>
<reference key="1">
    <citation type="journal article" date="2007" name="Genes Dev.">
        <title>New insights into Acinetobacter baumannii pathogenesis revealed by high-density pyrosequencing and transposon mutagenesis.</title>
        <authorList>
            <person name="Smith M.G."/>
            <person name="Gianoulis T.A."/>
            <person name="Pukatzki S."/>
            <person name="Mekalanos J.J."/>
            <person name="Ornston L.N."/>
            <person name="Gerstein M."/>
            <person name="Snyder M."/>
        </authorList>
    </citation>
    <scope>NUCLEOTIDE SEQUENCE [LARGE SCALE GENOMIC DNA]</scope>
    <source>
        <strain>ATCC 17978 / DSM 105126 / CIP 53.77 / LMG 1025 / NCDC KC755 / 5377</strain>
    </source>
</reference>
<dbReference type="EC" id="2.8.4.4" evidence="1"/>
<dbReference type="EMBL" id="CP000521">
    <property type="protein sequence ID" value="ABO12403.1"/>
    <property type="molecule type" value="Genomic_DNA"/>
</dbReference>
<dbReference type="RefSeq" id="WP_000856678.1">
    <property type="nucleotide sequence ID" value="NZ_CP053098.1"/>
</dbReference>
<dbReference type="SMR" id="A3M659"/>
<dbReference type="GeneID" id="92796654"/>
<dbReference type="KEGG" id="acb:A1S_1976"/>
<dbReference type="HOGENOM" id="CLU_018697_0_0_6"/>
<dbReference type="GO" id="GO:0005829">
    <property type="term" value="C:cytosol"/>
    <property type="evidence" value="ECO:0007669"/>
    <property type="project" value="TreeGrafter"/>
</dbReference>
<dbReference type="GO" id="GO:0051539">
    <property type="term" value="F:4 iron, 4 sulfur cluster binding"/>
    <property type="evidence" value="ECO:0007669"/>
    <property type="project" value="UniProtKB-UniRule"/>
</dbReference>
<dbReference type="GO" id="GO:0035599">
    <property type="term" value="F:aspartic acid methylthiotransferase activity"/>
    <property type="evidence" value="ECO:0007669"/>
    <property type="project" value="TreeGrafter"/>
</dbReference>
<dbReference type="GO" id="GO:0046872">
    <property type="term" value="F:metal ion binding"/>
    <property type="evidence" value="ECO:0007669"/>
    <property type="project" value="UniProtKB-KW"/>
</dbReference>
<dbReference type="GO" id="GO:0103039">
    <property type="term" value="F:protein methylthiotransferase activity"/>
    <property type="evidence" value="ECO:0007669"/>
    <property type="project" value="UniProtKB-EC"/>
</dbReference>
<dbReference type="GO" id="GO:0006400">
    <property type="term" value="P:tRNA modification"/>
    <property type="evidence" value="ECO:0007669"/>
    <property type="project" value="InterPro"/>
</dbReference>
<dbReference type="CDD" id="cd01335">
    <property type="entry name" value="Radical_SAM"/>
    <property type="match status" value="1"/>
</dbReference>
<dbReference type="FunFam" id="3.40.50.12160:FF:000002">
    <property type="entry name" value="Ribosomal protein S12 methylthiotransferase RimO"/>
    <property type="match status" value="1"/>
</dbReference>
<dbReference type="FunFam" id="3.80.30.20:FF:000001">
    <property type="entry name" value="tRNA-2-methylthio-N(6)-dimethylallyladenosine synthase 2"/>
    <property type="match status" value="1"/>
</dbReference>
<dbReference type="Gene3D" id="3.40.50.12160">
    <property type="entry name" value="Methylthiotransferase, N-terminal domain"/>
    <property type="match status" value="1"/>
</dbReference>
<dbReference type="Gene3D" id="2.40.50.140">
    <property type="entry name" value="Nucleic acid-binding proteins"/>
    <property type="match status" value="1"/>
</dbReference>
<dbReference type="Gene3D" id="3.80.30.20">
    <property type="entry name" value="tm_1862 like domain"/>
    <property type="match status" value="1"/>
</dbReference>
<dbReference type="HAMAP" id="MF_01865">
    <property type="entry name" value="MTTase_RimO"/>
    <property type="match status" value="1"/>
</dbReference>
<dbReference type="InterPro" id="IPR006638">
    <property type="entry name" value="Elp3/MiaA/NifB-like_rSAM"/>
</dbReference>
<dbReference type="InterPro" id="IPR005839">
    <property type="entry name" value="Methylthiotransferase"/>
</dbReference>
<dbReference type="InterPro" id="IPR020612">
    <property type="entry name" value="Methylthiotransferase_CS"/>
</dbReference>
<dbReference type="InterPro" id="IPR013848">
    <property type="entry name" value="Methylthiotransferase_N"/>
</dbReference>
<dbReference type="InterPro" id="IPR038135">
    <property type="entry name" value="Methylthiotransferase_N_sf"/>
</dbReference>
<dbReference type="InterPro" id="IPR012340">
    <property type="entry name" value="NA-bd_OB-fold"/>
</dbReference>
<dbReference type="InterPro" id="IPR005840">
    <property type="entry name" value="Ribosomal_uS12_MeSTrfase_RimO"/>
</dbReference>
<dbReference type="InterPro" id="IPR007197">
    <property type="entry name" value="rSAM"/>
</dbReference>
<dbReference type="InterPro" id="IPR023404">
    <property type="entry name" value="rSAM_horseshoe"/>
</dbReference>
<dbReference type="InterPro" id="IPR002792">
    <property type="entry name" value="TRAM_dom"/>
</dbReference>
<dbReference type="NCBIfam" id="TIGR01125">
    <property type="entry name" value="30S ribosomal protein S12 methylthiotransferase RimO"/>
    <property type="match status" value="1"/>
</dbReference>
<dbReference type="NCBIfam" id="TIGR00089">
    <property type="entry name" value="MiaB/RimO family radical SAM methylthiotransferase"/>
    <property type="match status" value="1"/>
</dbReference>
<dbReference type="PANTHER" id="PTHR43837">
    <property type="entry name" value="RIBOSOMAL PROTEIN S12 METHYLTHIOTRANSFERASE RIMO"/>
    <property type="match status" value="1"/>
</dbReference>
<dbReference type="PANTHER" id="PTHR43837:SF1">
    <property type="entry name" value="RIBOSOMAL PROTEIN US12 METHYLTHIOTRANSFERASE RIMO"/>
    <property type="match status" value="1"/>
</dbReference>
<dbReference type="Pfam" id="PF04055">
    <property type="entry name" value="Radical_SAM"/>
    <property type="match status" value="1"/>
</dbReference>
<dbReference type="Pfam" id="PF18693">
    <property type="entry name" value="TRAM_2"/>
    <property type="match status" value="1"/>
</dbReference>
<dbReference type="Pfam" id="PF00919">
    <property type="entry name" value="UPF0004"/>
    <property type="match status" value="1"/>
</dbReference>
<dbReference type="SFLD" id="SFLDG01082">
    <property type="entry name" value="B12-binding_domain_containing"/>
    <property type="match status" value="1"/>
</dbReference>
<dbReference type="SFLD" id="SFLDS00029">
    <property type="entry name" value="Radical_SAM"/>
    <property type="match status" value="1"/>
</dbReference>
<dbReference type="SFLD" id="SFLDF00274">
    <property type="entry name" value="ribosomal_protein_S12_methylth"/>
    <property type="match status" value="1"/>
</dbReference>
<dbReference type="SMART" id="SM00729">
    <property type="entry name" value="Elp3"/>
    <property type="match status" value="1"/>
</dbReference>
<dbReference type="SUPFAM" id="SSF102114">
    <property type="entry name" value="Radical SAM enzymes"/>
    <property type="match status" value="1"/>
</dbReference>
<dbReference type="PROSITE" id="PS51449">
    <property type="entry name" value="MTTASE_N"/>
    <property type="match status" value="1"/>
</dbReference>
<dbReference type="PROSITE" id="PS01278">
    <property type="entry name" value="MTTASE_RADICAL"/>
    <property type="match status" value="1"/>
</dbReference>
<dbReference type="PROSITE" id="PS51918">
    <property type="entry name" value="RADICAL_SAM"/>
    <property type="match status" value="1"/>
</dbReference>
<dbReference type="PROSITE" id="PS50926">
    <property type="entry name" value="TRAM"/>
    <property type="match status" value="1"/>
</dbReference>
<feature type="chain" id="PRO_0000374681" description="Ribosomal protein uS12 methylthiotransferase RimO">
    <location>
        <begin position="1"/>
        <end position="447"/>
    </location>
</feature>
<feature type="domain" description="MTTase N-terminal" evidence="1">
    <location>
        <begin position="4"/>
        <end position="114"/>
    </location>
</feature>
<feature type="domain" description="Radical SAM core" evidence="2">
    <location>
        <begin position="133"/>
        <end position="370"/>
    </location>
</feature>
<feature type="domain" description="TRAM" evidence="1">
    <location>
        <begin position="373"/>
        <end position="443"/>
    </location>
</feature>
<feature type="binding site" evidence="1">
    <location>
        <position position="13"/>
    </location>
    <ligand>
        <name>[4Fe-4S] cluster</name>
        <dbReference type="ChEBI" id="CHEBI:49883"/>
        <label>1</label>
    </ligand>
</feature>
<feature type="binding site" evidence="1">
    <location>
        <position position="49"/>
    </location>
    <ligand>
        <name>[4Fe-4S] cluster</name>
        <dbReference type="ChEBI" id="CHEBI:49883"/>
        <label>1</label>
    </ligand>
</feature>
<feature type="binding site" evidence="1">
    <location>
        <position position="78"/>
    </location>
    <ligand>
        <name>[4Fe-4S] cluster</name>
        <dbReference type="ChEBI" id="CHEBI:49883"/>
        <label>1</label>
    </ligand>
</feature>
<feature type="binding site" evidence="1">
    <location>
        <position position="147"/>
    </location>
    <ligand>
        <name>[4Fe-4S] cluster</name>
        <dbReference type="ChEBI" id="CHEBI:49883"/>
        <label>2</label>
        <note>4Fe-4S-S-AdoMet</note>
    </ligand>
</feature>
<feature type="binding site" evidence="1">
    <location>
        <position position="151"/>
    </location>
    <ligand>
        <name>[4Fe-4S] cluster</name>
        <dbReference type="ChEBI" id="CHEBI:49883"/>
        <label>2</label>
        <note>4Fe-4S-S-AdoMet</note>
    </ligand>
</feature>
<feature type="binding site" evidence="1">
    <location>
        <position position="154"/>
    </location>
    <ligand>
        <name>[4Fe-4S] cluster</name>
        <dbReference type="ChEBI" id="CHEBI:49883"/>
        <label>2</label>
        <note>4Fe-4S-S-AdoMet</note>
    </ligand>
</feature>
<keyword id="KW-0004">4Fe-4S</keyword>
<keyword id="KW-0963">Cytoplasm</keyword>
<keyword id="KW-0408">Iron</keyword>
<keyword id="KW-0411">Iron-sulfur</keyword>
<keyword id="KW-0479">Metal-binding</keyword>
<keyword id="KW-0949">S-adenosyl-L-methionine</keyword>
<keyword id="KW-0808">Transferase</keyword>
<gene>
    <name evidence="1" type="primary">rimO</name>
    <name type="ordered locus">A1S_1976</name>
</gene>
<protein>
    <recommendedName>
        <fullName evidence="1">Ribosomal protein uS12 methylthiotransferase RimO</fullName>
        <shortName evidence="1">uS12 MTTase</shortName>
        <shortName evidence="1">uS12 methylthiotransferase</shortName>
        <ecNumber evidence="1">2.8.4.4</ecNumber>
    </recommendedName>
    <alternativeName>
        <fullName evidence="1">Ribosomal protein uS12 (aspartate-C(3))-methylthiotransferase</fullName>
    </alternativeName>
    <alternativeName>
        <fullName evidence="1">Ribosome maturation factor RimO</fullName>
    </alternativeName>
</protein>
<accession>A3M659</accession>
<name>RIMO_ACIBT</name>
<evidence type="ECO:0000255" key="1">
    <source>
        <dbReference type="HAMAP-Rule" id="MF_01865"/>
    </source>
</evidence>
<evidence type="ECO:0000255" key="2">
    <source>
        <dbReference type="PROSITE-ProRule" id="PRU01266"/>
    </source>
</evidence>